<evidence type="ECO:0000255" key="1">
    <source>
        <dbReference type="HAMAP-Rule" id="MF_00736"/>
    </source>
</evidence>
<evidence type="ECO:0000305" key="2"/>
<accession>Q8RHI2</accession>
<reference key="1">
    <citation type="journal article" date="2002" name="J. Bacteriol.">
        <title>Genome sequence and analysis of the oral bacterium Fusobacterium nucleatum strain ATCC 25586.</title>
        <authorList>
            <person name="Kapatral V."/>
            <person name="Anderson I."/>
            <person name="Ivanova N."/>
            <person name="Reznik G."/>
            <person name="Los T."/>
            <person name="Lykidis A."/>
            <person name="Bhattacharyya A."/>
            <person name="Bartman A."/>
            <person name="Gardner W."/>
            <person name="Grechkin G."/>
            <person name="Zhu L."/>
            <person name="Vasieva O."/>
            <person name="Chu L."/>
            <person name="Kogan Y."/>
            <person name="Chaga O."/>
            <person name="Goltsman E."/>
            <person name="Bernal A."/>
            <person name="Larsen N."/>
            <person name="D'Souza M."/>
            <person name="Walunas T."/>
            <person name="Pusch G."/>
            <person name="Haselkorn R."/>
            <person name="Fonstein M."/>
            <person name="Kyrpides N.C."/>
            <person name="Overbeek R."/>
        </authorList>
    </citation>
    <scope>NUCLEOTIDE SEQUENCE [LARGE SCALE GENOMIC DNA]</scope>
    <source>
        <strain>ATCC 25586 / DSM 15643 / BCRC 10681 / CIP 101130 / JCM 8532 / KCTC 2640 / LMG 13131 / VPI 4355</strain>
    </source>
</reference>
<sequence>MAKEVIQIIKLQLPAGKANPAPPVGPALGQHGVNIMEFCKAFNAKTQDKAGWIIPVEISVYSDRSFTFILKTPPASDLLKKAAGITSGAKNSKKEVAGKITTAKLKELAETKMPDLNASSVETAMKIIAGSARSMGIKIED</sequence>
<comment type="function">
    <text evidence="1">Forms part of the ribosomal stalk which helps the ribosome interact with GTP-bound translation factors.</text>
</comment>
<comment type="subunit">
    <text evidence="1">Part of the ribosomal stalk of the 50S ribosomal subunit. Interacts with L10 and the large rRNA to form the base of the stalk. L10 forms an elongated spine to which L12 dimers bind in a sequential fashion forming a multimeric L10(L12)X complex.</text>
</comment>
<comment type="PTM">
    <text evidence="1">One or more lysine residues are methylated.</text>
</comment>
<comment type="similarity">
    <text evidence="1">Belongs to the universal ribosomal protein uL11 family.</text>
</comment>
<feature type="chain" id="PRO_0000104289" description="Large ribosomal subunit protein uL11">
    <location>
        <begin position="1"/>
        <end position="141"/>
    </location>
</feature>
<dbReference type="EMBL" id="AE009951">
    <property type="protein sequence ID" value="AAL94125.1"/>
    <property type="molecule type" value="Genomic_DNA"/>
</dbReference>
<dbReference type="RefSeq" id="NP_602826.1">
    <property type="nucleotide sequence ID" value="NC_003454.1"/>
</dbReference>
<dbReference type="RefSeq" id="WP_005894933.1">
    <property type="nucleotide sequence ID" value="NZ_OZ209243.1"/>
</dbReference>
<dbReference type="SMR" id="Q8RHI2"/>
<dbReference type="FunCoup" id="Q8RHI2">
    <property type="interactions" value="396"/>
</dbReference>
<dbReference type="STRING" id="190304.FN2040"/>
<dbReference type="PaxDb" id="190304-FN2040"/>
<dbReference type="EnsemblBacteria" id="AAL94125">
    <property type="protein sequence ID" value="AAL94125"/>
    <property type="gene ID" value="FN2040"/>
</dbReference>
<dbReference type="GeneID" id="79782953"/>
<dbReference type="KEGG" id="fnu:FN2040"/>
<dbReference type="PATRIC" id="fig|190304.8.peg.503"/>
<dbReference type="eggNOG" id="COG0080">
    <property type="taxonomic scope" value="Bacteria"/>
</dbReference>
<dbReference type="HOGENOM" id="CLU_074237_2_0_0"/>
<dbReference type="InParanoid" id="Q8RHI2"/>
<dbReference type="BioCyc" id="FNUC190304:G1FZS-527-MONOMER"/>
<dbReference type="Proteomes" id="UP000002521">
    <property type="component" value="Chromosome"/>
</dbReference>
<dbReference type="GO" id="GO:0022625">
    <property type="term" value="C:cytosolic large ribosomal subunit"/>
    <property type="evidence" value="ECO:0000318"/>
    <property type="project" value="GO_Central"/>
</dbReference>
<dbReference type="GO" id="GO:0070180">
    <property type="term" value="F:large ribosomal subunit rRNA binding"/>
    <property type="evidence" value="ECO:0000318"/>
    <property type="project" value="GO_Central"/>
</dbReference>
<dbReference type="GO" id="GO:0003735">
    <property type="term" value="F:structural constituent of ribosome"/>
    <property type="evidence" value="ECO:0000318"/>
    <property type="project" value="GO_Central"/>
</dbReference>
<dbReference type="GO" id="GO:0006412">
    <property type="term" value="P:translation"/>
    <property type="evidence" value="ECO:0000318"/>
    <property type="project" value="GO_Central"/>
</dbReference>
<dbReference type="CDD" id="cd00349">
    <property type="entry name" value="Ribosomal_L11"/>
    <property type="match status" value="1"/>
</dbReference>
<dbReference type="FunFam" id="1.10.10.250:FF:000001">
    <property type="entry name" value="50S ribosomal protein L11"/>
    <property type="match status" value="1"/>
</dbReference>
<dbReference type="FunFam" id="3.30.1550.10:FF:000001">
    <property type="entry name" value="50S ribosomal protein L11"/>
    <property type="match status" value="1"/>
</dbReference>
<dbReference type="Gene3D" id="1.10.10.250">
    <property type="entry name" value="Ribosomal protein L11, C-terminal domain"/>
    <property type="match status" value="1"/>
</dbReference>
<dbReference type="Gene3D" id="3.30.1550.10">
    <property type="entry name" value="Ribosomal protein L11/L12, N-terminal domain"/>
    <property type="match status" value="1"/>
</dbReference>
<dbReference type="HAMAP" id="MF_00736">
    <property type="entry name" value="Ribosomal_uL11"/>
    <property type="match status" value="1"/>
</dbReference>
<dbReference type="InterPro" id="IPR000911">
    <property type="entry name" value="Ribosomal_uL11"/>
</dbReference>
<dbReference type="InterPro" id="IPR006519">
    <property type="entry name" value="Ribosomal_uL11_bac-typ"/>
</dbReference>
<dbReference type="InterPro" id="IPR020783">
    <property type="entry name" value="Ribosomal_uL11_C"/>
</dbReference>
<dbReference type="InterPro" id="IPR036769">
    <property type="entry name" value="Ribosomal_uL11_C_sf"/>
</dbReference>
<dbReference type="InterPro" id="IPR020785">
    <property type="entry name" value="Ribosomal_uL11_CS"/>
</dbReference>
<dbReference type="InterPro" id="IPR020784">
    <property type="entry name" value="Ribosomal_uL11_N"/>
</dbReference>
<dbReference type="InterPro" id="IPR036796">
    <property type="entry name" value="Ribosomal_uL11_N_sf"/>
</dbReference>
<dbReference type="NCBIfam" id="TIGR01632">
    <property type="entry name" value="L11_bact"/>
    <property type="match status" value="1"/>
</dbReference>
<dbReference type="PANTHER" id="PTHR11661">
    <property type="entry name" value="60S RIBOSOMAL PROTEIN L12"/>
    <property type="match status" value="1"/>
</dbReference>
<dbReference type="PANTHER" id="PTHR11661:SF1">
    <property type="entry name" value="LARGE RIBOSOMAL SUBUNIT PROTEIN UL11M"/>
    <property type="match status" value="1"/>
</dbReference>
<dbReference type="Pfam" id="PF00298">
    <property type="entry name" value="Ribosomal_L11"/>
    <property type="match status" value="1"/>
</dbReference>
<dbReference type="Pfam" id="PF03946">
    <property type="entry name" value="Ribosomal_L11_N"/>
    <property type="match status" value="1"/>
</dbReference>
<dbReference type="SMART" id="SM00649">
    <property type="entry name" value="RL11"/>
    <property type="match status" value="1"/>
</dbReference>
<dbReference type="SUPFAM" id="SSF54747">
    <property type="entry name" value="Ribosomal L11/L12e N-terminal domain"/>
    <property type="match status" value="1"/>
</dbReference>
<dbReference type="SUPFAM" id="SSF46906">
    <property type="entry name" value="Ribosomal protein L11, C-terminal domain"/>
    <property type="match status" value="1"/>
</dbReference>
<dbReference type="PROSITE" id="PS00359">
    <property type="entry name" value="RIBOSOMAL_L11"/>
    <property type="match status" value="1"/>
</dbReference>
<organism>
    <name type="scientific">Fusobacterium nucleatum subsp. nucleatum (strain ATCC 25586 / DSM 15643 / BCRC 10681 / CIP 101130 / JCM 8532 / KCTC 2640 / LMG 13131 / VPI 4355)</name>
    <dbReference type="NCBI Taxonomy" id="190304"/>
    <lineage>
        <taxon>Bacteria</taxon>
        <taxon>Fusobacteriati</taxon>
        <taxon>Fusobacteriota</taxon>
        <taxon>Fusobacteriia</taxon>
        <taxon>Fusobacteriales</taxon>
        <taxon>Fusobacteriaceae</taxon>
        <taxon>Fusobacterium</taxon>
    </lineage>
</organism>
<proteinExistence type="inferred from homology"/>
<protein>
    <recommendedName>
        <fullName evidence="1">Large ribosomal subunit protein uL11</fullName>
    </recommendedName>
    <alternativeName>
        <fullName evidence="2">50S ribosomal protein L11</fullName>
    </alternativeName>
</protein>
<gene>
    <name evidence="1" type="primary">rplK</name>
    <name type="ordered locus">FN2040</name>
</gene>
<keyword id="KW-0488">Methylation</keyword>
<keyword id="KW-1185">Reference proteome</keyword>
<keyword id="KW-0687">Ribonucleoprotein</keyword>
<keyword id="KW-0689">Ribosomal protein</keyword>
<keyword id="KW-0694">RNA-binding</keyword>
<keyword id="KW-0699">rRNA-binding</keyword>
<name>RL11_FUSNN</name>